<keyword id="KW-0143">Chaperone</keyword>
<keyword id="KW-0539">Nucleus</keyword>
<keyword id="KW-1185">Reference proteome</keyword>
<name>CHZ1_CHAGB</name>
<feature type="chain" id="PRO_0000330207" description="Histone H2A.Z-specific chaperone CHZ1">
    <location>
        <begin position="1"/>
        <end position="123"/>
    </location>
</feature>
<feature type="region of interest" description="Disordered" evidence="2">
    <location>
        <begin position="1"/>
        <end position="123"/>
    </location>
</feature>
<feature type="compositionally biased region" description="Acidic residues" evidence="2">
    <location>
        <begin position="37"/>
        <end position="73"/>
    </location>
</feature>
<feature type="compositionally biased region" description="Acidic residues" evidence="2">
    <location>
        <begin position="96"/>
        <end position="110"/>
    </location>
</feature>
<feature type="compositionally biased region" description="Basic and acidic residues" evidence="2">
    <location>
        <begin position="111"/>
        <end position="123"/>
    </location>
</feature>
<evidence type="ECO:0000250" key="1"/>
<evidence type="ECO:0000256" key="2">
    <source>
        <dbReference type="SAM" id="MobiDB-lite"/>
    </source>
</evidence>
<evidence type="ECO:0000305" key="3"/>
<accession>Q2GNS7</accession>
<protein>
    <recommendedName>
        <fullName>Histone H2A.Z-specific chaperone CHZ1</fullName>
    </recommendedName>
</protein>
<proteinExistence type="inferred from homology"/>
<organism>
    <name type="scientific">Chaetomium globosum (strain ATCC 6205 / CBS 148.51 / DSM 1962 / NBRC 6347 / NRRL 1970)</name>
    <name type="common">Soil fungus</name>
    <dbReference type="NCBI Taxonomy" id="306901"/>
    <lineage>
        <taxon>Eukaryota</taxon>
        <taxon>Fungi</taxon>
        <taxon>Dikarya</taxon>
        <taxon>Ascomycota</taxon>
        <taxon>Pezizomycotina</taxon>
        <taxon>Sordariomycetes</taxon>
        <taxon>Sordariomycetidae</taxon>
        <taxon>Sordariales</taxon>
        <taxon>Chaetomiaceae</taxon>
        <taxon>Chaetomium</taxon>
    </lineage>
</organism>
<reference key="1">
    <citation type="journal article" date="2015" name="Genome Announc.">
        <title>Draft genome sequence of the cellulolytic fungus Chaetomium globosum.</title>
        <authorList>
            <person name="Cuomo C.A."/>
            <person name="Untereiner W.A."/>
            <person name="Ma L.-J."/>
            <person name="Grabherr M."/>
            <person name="Birren B.W."/>
        </authorList>
    </citation>
    <scope>NUCLEOTIDE SEQUENCE [LARGE SCALE GENOMIC DNA]</scope>
    <source>
        <strain>ATCC 6205 / CBS 148.51 / DSM 1962 / NBRC 6347 / NRRL 1970</strain>
    </source>
</reference>
<dbReference type="EMBL" id="CH408035">
    <property type="protein sequence ID" value="EAQ83973.1"/>
    <property type="status" value="ALT_SEQ"/>
    <property type="molecule type" value="Genomic_DNA"/>
</dbReference>
<dbReference type="RefSeq" id="XP_001228304.1">
    <property type="nucleotide sequence ID" value="XM_001228303.1"/>
</dbReference>
<dbReference type="STRING" id="306901.Q2GNS7"/>
<dbReference type="GeneID" id="4396727"/>
<dbReference type="VEuPathDB" id="FungiDB:CHGG_10377"/>
<dbReference type="eggNOG" id="ENOG502SCMA">
    <property type="taxonomic scope" value="Eukaryota"/>
</dbReference>
<dbReference type="HOGENOM" id="CLU_842454_0_0_1"/>
<dbReference type="InParanoid" id="Q2GNS7"/>
<dbReference type="OrthoDB" id="1894652at2759"/>
<dbReference type="Proteomes" id="UP000001056">
    <property type="component" value="Unassembled WGS sequence"/>
</dbReference>
<dbReference type="GO" id="GO:0005634">
    <property type="term" value="C:nucleus"/>
    <property type="evidence" value="ECO:0007669"/>
    <property type="project" value="UniProtKB-SubCell"/>
</dbReference>
<dbReference type="InterPro" id="IPR019098">
    <property type="entry name" value="Histone_chaperone_domain_CHZ"/>
</dbReference>
<dbReference type="Pfam" id="PF09649">
    <property type="entry name" value="CHZ"/>
    <property type="match status" value="1"/>
</dbReference>
<dbReference type="SMART" id="SM01082">
    <property type="entry name" value="CHZ"/>
    <property type="match status" value="1"/>
</dbReference>
<comment type="function">
    <text evidence="1">Forms a chaperone-bound H2A.Z-H2B complex that acts as a source for SWR1 complex-dependent H2A to H2A.Z histone replacement in chromatin.</text>
</comment>
<comment type="subunit">
    <text evidence="1">Forms a heterotrimer with H2A.Z-H2B, stabilizing the association of the histone dimer. Also, with a lower affinity, forms a heterotrimer with H2A-H2B (By similarity).</text>
</comment>
<comment type="subcellular location">
    <subcellularLocation>
        <location evidence="1">Nucleus</location>
    </subcellularLocation>
</comment>
<comment type="similarity">
    <text evidence="3">Belongs to the CHZ1 family.</text>
</comment>
<comment type="sequence caution" evidence="3">
    <conflict type="erroneous gene model prediction">
        <sequence resource="EMBL-CDS" id="EAQ83973"/>
    </conflict>
</comment>
<sequence>MSAQNSTDPMGATNPENGGATATDLKGKGRAPAAQEPVEDTSMAEDDDDDDDEEDPEEEPEAADDDNMEEIDLDNVIGRRTRGKVIDFANAAQENPADDDDEEDDDDFVEDDNKMDDSKMDED</sequence>
<gene>
    <name type="primary">CHZ1</name>
    <name type="ORF">CHGG_10377</name>
</gene>